<organism>
    <name type="scientific">Drosophila melanogaster</name>
    <name type="common">Fruit fly</name>
    <dbReference type="NCBI Taxonomy" id="7227"/>
    <lineage>
        <taxon>Eukaryota</taxon>
        <taxon>Metazoa</taxon>
        <taxon>Ecdysozoa</taxon>
        <taxon>Arthropoda</taxon>
        <taxon>Hexapoda</taxon>
        <taxon>Insecta</taxon>
        <taxon>Pterygota</taxon>
        <taxon>Neoptera</taxon>
        <taxon>Endopterygota</taxon>
        <taxon>Diptera</taxon>
        <taxon>Brachycera</taxon>
        <taxon>Muscomorpha</taxon>
        <taxon>Ephydroidea</taxon>
        <taxon>Drosophilidae</taxon>
        <taxon>Drosophila</taxon>
        <taxon>Sophophora</taxon>
    </lineage>
</organism>
<dbReference type="EC" id="2.7.11.24"/>
<dbReference type="EMBL" id="M95124">
    <property type="protein sequence ID" value="AAA28677.1"/>
    <property type="molecule type" value="mRNA"/>
</dbReference>
<dbReference type="EMBL" id="AE013599">
    <property type="protein sequence ID" value="EAA46310.2"/>
    <property type="molecule type" value="Genomic_DNA"/>
</dbReference>
<dbReference type="EMBL" id="AE013599">
    <property type="protein sequence ID" value="EAA46311.2"/>
    <property type="molecule type" value="Genomic_DNA"/>
</dbReference>
<dbReference type="EMBL" id="AE013599">
    <property type="protein sequence ID" value="EAA46312.4"/>
    <property type="molecule type" value="Genomic_DNA"/>
</dbReference>
<dbReference type="EMBL" id="AE013599">
    <property type="protein sequence ID" value="EDP28106.2"/>
    <property type="molecule type" value="Genomic_DNA"/>
</dbReference>
<dbReference type="EMBL" id="AE013599">
    <property type="protein sequence ID" value="EDP28107.1"/>
    <property type="molecule type" value="Genomic_DNA"/>
</dbReference>
<dbReference type="EMBL" id="AE013599">
    <property type="protein sequence ID" value="EYR77323.1"/>
    <property type="molecule type" value="Genomic_DNA"/>
</dbReference>
<dbReference type="EMBL" id="AY070996">
    <property type="protein sequence ID" value="AAL48618.1"/>
    <property type="molecule type" value="mRNA"/>
</dbReference>
<dbReference type="PIR" id="A46036">
    <property type="entry name" value="A46036"/>
</dbReference>
<dbReference type="PIR" id="B46036">
    <property type="entry name" value="B46036"/>
</dbReference>
<dbReference type="RefSeq" id="NP_001015121.3">
    <molecule id="P40417-2"/>
    <property type="nucleotide sequence ID" value="NM_001015121.3"/>
</dbReference>
<dbReference type="RefSeq" id="NP_001015122.1">
    <molecule id="P40417-3"/>
    <property type="nucleotide sequence ID" value="NM_001015122.3"/>
</dbReference>
<dbReference type="RefSeq" id="NP_001015123.1">
    <molecule id="P40417-3"/>
    <property type="nucleotide sequence ID" value="NM_001015123.3"/>
</dbReference>
<dbReference type="RefSeq" id="NP_001104348.2">
    <molecule id="P40417-1"/>
    <property type="nucleotide sequence ID" value="NM_001110878.4"/>
</dbReference>
<dbReference type="RefSeq" id="NP_001104349.1">
    <molecule id="P40417-3"/>
    <property type="nucleotide sequence ID" value="NM_001110879.2"/>
</dbReference>
<dbReference type="RefSeq" id="NP_001287635.1">
    <molecule id="P40417-3"/>
    <property type="nucleotide sequence ID" value="NM_001300706.2"/>
</dbReference>
<dbReference type="SMR" id="P40417"/>
<dbReference type="BioGRID" id="78013">
    <property type="interactions" value="86"/>
</dbReference>
<dbReference type="DIP" id="DIP-17266N"/>
<dbReference type="FunCoup" id="P40417">
    <property type="interactions" value="1157"/>
</dbReference>
<dbReference type="IntAct" id="P40417">
    <property type="interactions" value="14"/>
</dbReference>
<dbReference type="MINT" id="P40417"/>
<dbReference type="STRING" id="7227.FBpp0311493"/>
<dbReference type="iPTMnet" id="P40417"/>
<dbReference type="PaxDb" id="7227-FBpp0112426"/>
<dbReference type="DNASU" id="3354888"/>
<dbReference type="EnsemblMetazoa" id="FBtr0113700">
    <molecule id="P40417-3"/>
    <property type="protein sequence ID" value="FBpp0112423"/>
    <property type="gene ID" value="FBgn0003256"/>
</dbReference>
<dbReference type="EnsemblMetazoa" id="FBtr0113702">
    <molecule id="P40417-3"/>
    <property type="protein sequence ID" value="FBpp0112425"/>
    <property type="gene ID" value="FBgn0003256"/>
</dbReference>
<dbReference type="EnsemblMetazoa" id="FBtr0113703">
    <molecule id="P40417-3"/>
    <property type="protein sequence ID" value="FBpp0112426"/>
    <property type="gene ID" value="FBgn0003256"/>
</dbReference>
<dbReference type="EnsemblMetazoa" id="FBtr0329919">
    <molecule id="P40417-2"/>
    <property type="protein sequence ID" value="FBpp0302952"/>
    <property type="gene ID" value="FBgn0003256"/>
</dbReference>
<dbReference type="EnsemblMetazoa" id="FBtr0329920">
    <molecule id="P40417-1"/>
    <property type="protein sequence ID" value="FBpp0302953"/>
    <property type="gene ID" value="FBgn0003256"/>
</dbReference>
<dbReference type="EnsemblMetazoa" id="FBtr0345337">
    <molecule id="P40417-3"/>
    <property type="protein sequence ID" value="FBpp0311493"/>
    <property type="gene ID" value="FBgn0003256"/>
</dbReference>
<dbReference type="GeneID" id="3354888"/>
<dbReference type="KEGG" id="dme:Dmel_CG12559"/>
<dbReference type="AGR" id="FB:FBgn0003256"/>
<dbReference type="CTD" id="3354888"/>
<dbReference type="FlyBase" id="FBgn0003256">
    <property type="gene designation" value="rl"/>
</dbReference>
<dbReference type="VEuPathDB" id="VectorBase:FBgn0003256"/>
<dbReference type="eggNOG" id="KOG0660">
    <property type="taxonomic scope" value="Eukaryota"/>
</dbReference>
<dbReference type="GeneTree" id="ENSGT00940000156771"/>
<dbReference type="InParanoid" id="P40417"/>
<dbReference type="OMA" id="SFFDFDY"/>
<dbReference type="OrthoDB" id="192887at2759"/>
<dbReference type="PhylomeDB" id="P40417"/>
<dbReference type="BRENDA" id="2.7.11.24">
    <property type="organism ID" value="1994"/>
</dbReference>
<dbReference type="Reactome" id="R-DME-110056">
    <property type="pathway name" value="MAPK3 (ERK1) activation"/>
</dbReference>
<dbReference type="Reactome" id="R-DME-112409">
    <property type="pathway name" value="RAF-independent MAPK1/3 activation"/>
</dbReference>
<dbReference type="Reactome" id="R-DME-112411">
    <property type="pathway name" value="MAPK1 (ERK2) activation"/>
</dbReference>
<dbReference type="Reactome" id="R-DME-1169408">
    <property type="pathway name" value="ISG15 antiviral mechanism"/>
</dbReference>
<dbReference type="Reactome" id="R-DME-1181150">
    <property type="pathway name" value="Signaling by NODAL"/>
</dbReference>
<dbReference type="Reactome" id="R-DME-1295596">
    <property type="pathway name" value="Spry regulation of FGF signaling"/>
</dbReference>
<dbReference type="Reactome" id="R-DME-1502540">
    <property type="pathway name" value="Signaling by Activin"/>
</dbReference>
<dbReference type="Reactome" id="R-DME-162658">
    <property type="pathway name" value="Golgi Cisternae Pericentriolar Stack Reorganization"/>
</dbReference>
<dbReference type="Reactome" id="R-DME-170968">
    <property type="pathway name" value="Frs2-mediated activation"/>
</dbReference>
<dbReference type="Reactome" id="R-DME-198753">
    <property type="pathway name" value="ERK/MAPK targets"/>
</dbReference>
<dbReference type="Reactome" id="R-DME-202670">
    <property type="pathway name" value="ERKs are inactivated"/>
</dbReference>
<dbReference type="Reactome" id="R-DME-2029482">
    <property type="pathway name" value="Regulation of actin dynamics for phagocytic cup formation"/>
</dbReference>
<dbReference type="Reactome" id="R-DME-2173795">
    <property type="pathway name" value="Downregulation of SMAD2/3:SMAD4 transcriptional activity"/>
</dbReference>
<dbReference type="Reactome" id="R-DME-2173796">
    <property type="pathway name" value="SMAD2/SMAD3:SMAD4 heterotrimer regulates transcription"/>
</dbReference>
<dbReference type="Reactome" id="R-DME-2559580">
    <property type="pathway name" value="Oxidative Stress Induced Senescence"/>
</dbReference>
<dbReference type="Reactome" id="R-DME-2559582">
    <property type="pathway name" value="Senescence-Associated Secretory Phenotype (SASP)"/>
</dbReference>
<dbReference type="Reactome" id="R-DME-2559585">
    <property type="pathway name" value="Oncogene Induced Senescence"/>
</dbReference>
<dbReference type="Reactome" id="R-DME-2871796">
    <property type="pathway name" value="FCERI mediated MAPK activation"/>
</dbReference>
<dbReference type="Reactome" id="R-DME-3371453">
    <property type="pathway name" value="Regulation of HSF1-mediated heat shock response"/>
</dbReference>
<dbReference type="Reactome" id="R-DME-375165">
    <property type="pathway name" value="NCAM signaling for neurite out-growth"/>
</dbReference>
<dbReference type="Reactome" id="R-DME-437239">
    <property type="pathway name" value="Recycling pathway of L1"/>
</dbReference>
<dbReference type="Reactome" id="R-DME-445144">
    <property type="pathway name" value="Signal transduction by L1"/>
</dbReference>
<dbReference type="Reactome" id="R-DME-450341">
    <property type="pathway name" value="Activation of the AP-1 family of transcription factors"/>
</dbReference>
<dbReference type="Reactome" id="R-DME-456926">
    <property type="pathway name" value="Thrombin signalling through proteinase activated receptors (PARs)"/>
</dbReference>
<dbReference type="Reactome" id="R-DME-5654726">
    <property type="pathway name" value="Negative regulation of FGFR1 signaling"/>
</dbReference>
<dbReference type="Reactome" id="R-DME-5654727">
    <property type="pathway name" value="Negative regulation of FGFR2 signaling"/>
</dbReference>
<dbReference type="Reactome" id="R-DME-5654732">
    <property type="pathway name" value="Negative regulation of FGFR3 signaling"/>
</dbReference>
<dbReference type="Reactome" id="R-DME-5654733">
    <property type="pathway name" value="Negative regulation of FGFR4 signaling"/>
</dbReference>
<dbReference type="Reactome" id="R-DME-5663213">
    <property type="pathway name" value="RHO GTPases Activate WASPs and WAVEs"/>
</dbReference>
<dbReference type="Reactome" id="R-DME-5673001">
    <property type="pathway name" value="RAF/MAP kinase cascade"/>
</dbReference>
<dbReference type="Reactome" id="R-DME-5674135">
    <property type="pathway name" value="MAP2K and MAPK activation"/>
</dbReference>
<dbReference type="Reactome" id="R-DME-5674499">
    <property type="pathway name" value="Negative feedback regulation of MAPK pathway"/>
</dbReference>
<dbReference type="Reactome" id="R-DME-5675221">
    <property type="pathway name" value="Negative regulation of MAPK pathway"/>
</dbReference>
<dbReference type="Reactome" id="R-DME-6798695">
    <property type="pathway name" value="Neutrophil degranulation"/>
</dbReference>
<dbReference type="Reactome" id="R-DME-74749">
    <property type="pathway name" value="Signal attenuation"/>
</dbReference>
<dbReference type="Reactome" id="R-DME-877300">
    <property type="pathway name" value="Interferon gamma signaling"/>
</dbReference>
<dbReference type="Reactome" id="R-DME-881907">
    <property type="pathway name" value="Gastrin-CREB signalling pathway via PKC and MAPK"/>
</dbReference>
<dbReference type="Reactome" id="R-DME-9627069">
    <property type="pathway name" value="Regulation of the apoptosome activity"/>
</dbReference>
<dbReference type="Reactome" id="R-DME-9634635">
    <property type="pathway name" value="Estrogen-stimulated signaling through PRKCZ"/>
</dbReference>
<dbReference type="Reactome" id="R-DME-9634638">
    <property type="pathway name" value="Estrogen-dependent nuclear events downstream of ESR-membrane signaling"/>
</dbReference>
<dbReference type="Reactome" id="R-DME-9856649">
    <property type="pathway name" value="Transcriptional and post-translational regulation of MITF-M expression and activity"/>
</dbReference>
<dbReference type="SignaLink" id="P40417"/>
<dbReference type="BioGRID-ORCS" id="3354888">
    <property type="hits" value="1 hit in 3 CRISPR screens"/>
</dbReference>
<dbReference type="ChiTaRS" id="rl">
    <property type="organism name" value="fly"/>
</dbReference>
<dbReference type="GenomeRNAi" id="3354888"/>
<dbReference type="PRO" id="PR:P40417"/>
<dbReference type="Proteomes" id="UP000000803">
    <property type="component" value="Chromosome 2R"/>
</dbReference>
<dbReference type="Bgee" id="FBgn0003256">
    <property type="expression patterns" value="Expressed in hemocyte (sensu Nematoda and Protostomia) in insect leg and 279 other cell types or tissues"/>
</dbReference>
<dbReference type="ExpressionAtlas" id="P40417">
    <property type="expression patterns" value="baseline and differential"/>
</dbReference>
<dbReference type="GO" id="GO:0005737">
    <property type="term" value="C:cytoplasm"/>
    <property type="evidence" value="ECO:0000318"/>
    <property type="project" value="GO_Central"/>
</dbReference>
<dbReference type="GO" id="GO:0005829">
    <property type="term" value="C:cytosol"/>
    <property type="evidence" value="ECO:0000314"/>
    <property type="project" value="FlyBase"/>
</dbReference>
<dbReference type="GO" id="GO:0031594">
    <property type="term" value="C:neuromuscular junction"/>
    <property type="evidence" value="ECO:0000314"/>
    <property type="project" value="FlyBase"/>
</dbReference>
<dbReference type="GO" id="GO:0005634">
    <property type="term" value="C:nucleus"/>
    <property type="evidence" value="ECO:0000314"/>
    <property type="project" value="FlyBase"/>
</dbReference>
<dbReference type="GO" id="GO:0005524">
    <property type="term" value="F:ATP binding"/>
    <property type="evidence" value="ECO:0007669"/>
    <property type="project" value="UniProtKB-KW"/>
</dbReference>
<dbReference type="GO" id="GO:0140297">
    <property type="term" value="F:DNA-binding transcription factor binding"/>
    <property type="evidence" value="ECO:0000353"/>
    <property type="project" value="FlyBase"/>
</dbReference>
<dbReference type="GO" id="GO:0004707">
    <property type="term" value="F:MAP kinase activity"/>
    <property type="evidence" value="ECO:0000314"/>
    <property type="project" value="FlyBase"/>
</dbReference>
<dbReference type="GO" id="GO:0019901">
    <property type="term" value="F:protein kinase binding"/>
    <property type="evidence" value="ECO:0000353"/>
    <property type="project" value="FlyBase"/>
</dbReference>
<dbReference type="GO" id="GO:0106310">
    <property type="term" value="F:protein serine kinase activity"/>
    <property type="evidence" value="ECO:0007669"/>
    <property type="project" value="RHEA"/>
</dbReference>
<dbReference type="GO" id="GO:0004674">
    <property type="term" value="F:protein serine/threonine kinase activity"/>
    <property type="evidence" value="ECO:0000314"/>
    <property type="project" value="FlyBase"/>
</dbReference>
<dbReference type="GO" id="GO:0048149">
    <property type="term" value="P:behavioral response to ethanol"/>
    <property type="evidence" value="ECO:0000315"/>
    <property type="project" value="FlyBase"/>
</dbReference>
<dbReference type="GO" id="GO:0060446">
    <property type="term" value="P:branching involved in open tracheal system development"/>
    <property type="evidence" value="ECO:0000314"/>
    <property type="project" value="FlyBase"/>
</dbReference>
<dbReference type="GO" id="GO:0007166">
    <property type="term" value="P:cell surface receptor signaling pathway"/>
    <property type="evidence" value="ECO:0000318"/>
    <property type="project" value="GO_Central"/>
</dbReference>
<dbReference type="GO" id="GO:0071243">
    <property type="term" value="P:cellular response to arsenic-containing substance"/>
    <property type="evidence" value="ECO:0000314"/>
    <property type="project" value="FlyBase"/>
</dbReference>
<dbReference type="GO" id="GO:0071276">
    <property type="term" value="P:cellular response to cadmium ion"/>
    <property type="evidence" value="ECO:0000314"/>
    <property type="project" value="FlyBase"/>
</dbReference>
<dbReference type="GO" id="GO:0034614">
    <property type="term" value="P:cellular response to reactive oxygen species"/>
    <property type="evidence" value="ECO:0000314"/>
    <property type="project" value="FlyBase"/>
</dbReference>
<dbReference type="GO" id="GO:0009267">
    <property type="term" value="P:cellular response to starvation"/>
    <property type="evidence" value="ECO:0000315"/>
    <property type="project" value="FlyBase"/>
</dbReference>
<dbReference type="GO" id="GO:0051607">
    <property type="term" value="P:defense response to virus"/>
    <property type="evidence" value="ECO:0000315"/>
    <property type="project" value="FlyBase"/>
</dbReference>
<dbReference type="GO" id="GO:0008340">
    <property type="term" value="P:determination of adult lifespan"/>
    <property type="evidence" value="ECO:0000315"/>
    <property type="project" value="FlyBase"/>
</dbReference>
<dbReference type="GO" id="GO:0046843">
    <property type="term" value="P:dorsal appendage formation"/>
    <property type="evidence" value="ECO:0000270"/>
    <property type="project" value="FlyBase"/>
</dbReference>
<dbReference type="GO" id="GO:0007173">
    <property type="term" value="P:epidermal growth factor receptor signaling pathway"/>
    <property type="evidence" value="ECO:0000314"/>
    <property type="project" value="FlyBase"/>
</dbReference>
<dbReference type="GO" id="GO:0070371">
    <property type="term" value="P:ERK1 and ERK2 cascade"/>
    <property type="evidence" value="ECO:0000314"/>
    <property type="project" value="FlyBase"/>
</dbReference>
<dbReference type="GO" id="GO:0008543">
    <property type="term" value="P:fibroblast growth factor receptor signaling pathway"/>
    <property type="evidence" value="ECO:0000314"/>
    <property type="project" value="FlyBase"/>
</dbReference>
<dbReference type="GO" id="GO:0007476">
    <property type="term" value="P:imaginal disc-derived wing morphogenesis"/>
    <property type="evidence" value="ECO:0000315"/>
    <property type="project" value="FlyBase"/>
</dbReference>
<dbReference type="GO" id="GO:0007474">
    <property type="term" value="P:imaginal disc-derived wing vein specification"/>
    <property type="evidence" value="ECO:0000315"/>
    <property type="project" value="FlyBase"/>
</dbReference>
<dbReference type="GO" id="GO:0008286">
    <property type="term" value="P:insulin receptor signaling pathway"/>
    <property type="evidence" value="ECO:0000314"/>
    <property type="project" value="FlyBase"/>
</dbReference>
<dbReference type="GO" id="GO:0035556">
    <property type="term" value="P:intracellular signal transduction"/>
    <property type="evidence" value="ECO:0000318"/>
    <property type="project" value="GO_Central"/>
</dbReference>
<dbReference type="GO" id="GO:0007479">
    <property type="term" value="P:leg disc proximal/distal pattern formation"/>
    <property type="evidence" value="ECO:0000270"/>
    <property type="project" value="FlyBase"/>
</dbReference>
<dbReference type="GO" id="GO:0035170">
    <property type="term" value="P:lymph gland crystal cell differentiation"/>
    <property type="evidence" value="ECO:0000315"/>
    <property type="project" value="FlyBase"/>
</dbReference>
<dbReference type="GO" id="GO:0035169">
    <property type="term" value="P:lymph gland plasmatocyte differentiation"/>
    <property type="evidence" value="ECO:0000315"/>
    <property type="project" value="FlyBase"/>
</dbReference>
<dbReference type="GO" id="GO:0000165">
    <property type="term" value="P:MAPK cascade"/>
    <property type="evidence" value="ECO:0000315"/>
    <property type="project" value="UniProtKB"/>
</dbReference>
<dbReference type="GO" id="GO:0007552">
    <property type="term" value="P:metamorphosis"/>
    <property type="evidence" value="ECO:0000315"/>
    <property type="project" value="FlyBase"/>
</dbReference>
<dbReference type="GO" id="GO:0000278">
    <property type="term" value="P:mitotic cell cycle"/>
    <property type="evidence" value="ECO:0000315"/>
    <property type="project" value="FlyBase"/>
</dbReference>
<dbReference type="GO" id="GO:0050804">
    <property type="term" value="P:modulation of chemical synaptic transmission"/>
    <property type="evidence" value="ECO:0000315"/>
    <property type="project" value="FlyBase"/>
</dbReference>
<dbReference type="GO" id="GO:0016242">
    <property type="term" value="P:negative regulation of macroautophagy"/>
    <property type="evidence" value="ECO:0000315"/>
    <property type="project" value="FlyBase"/>
</dbReference>
<dbReference type="GO" id="GO:0008284">
    <property type="term" value="P:positive regulation of cell population proliferation"/>
    <property type="evidence" value="ECO:0000315"/>
    <property type="project" value="FlyBase"/>
</dbReference>
<dbReference type="GO" id="GO:0045793">
    <property type="term" value="P:positive regulation of cell size"/>
    <property type="evidence" value="ECO:0000315"/>
    <property type="project" value="FlyBase"/>
</dbReference>
<dbReference type="GO" id="GO:0046534">
    <property type="term" value="P:positive regulation of photoreceptor cell differentiation"/>
    <property type="evidence" value="ECO:0000315"/>
    <property type="project" value="FlyBase"/>
</dbReference>
<dbReference type="GO" id="GO:0090303">
    <property type="term" value="P:positive regulation of wound healing"/>
    <property type="evidence" value="ECO:0000315"/>
    <property type="project" value="FlyBase"/>
</dbReference>
<dbReference type="GO" id="GO:0007465">
    <property type="term" value="P:R7 cell fate commitment"/>
    <property type="evidence" value="ECO:0000316"/>
    <property type="project" value="FlyBase"/>
</dbReference>
<dbReference type="GO" id="GO:2000826">
    <property type="term" value="P:regulation of heart morphogenesis"/>
    <property type="evidence" value="ECO:0000316"/>
    <property type="project" value="FlyBase"/>
</dbReference>
<dbReference type="GO" id="GO:2001023">
    <property type="term" value="P:regulation of response to drug"/>
    <property type="evidence" value="ECO:0000315"/>
    <property type="project" value="FlyBase"/>
</dbReference>
<dbReference type="GO" id="GO:0045500">
    <property type="term" value="P:sevenless signaling pathway"/>
    <property type="evidence" value="ECO:0000314"/>
    <property type="project" value="FlyBase"/>
</dbReference>
<dbReference type="GO" id="GO:0007430">
    <property type="term" value="P:terminal branching, open tracheal system"/>
    <property type="evidence" value="ECO:0000315"/>
    <property type="project" value="FlyBase"/>
</dbReference>
<dbReference type="GO" id="GO:0007362">
    <property type="term" value="P:terminal region determination"/>
    <property type="evidence" value="ECO:0000270"/>
    <property type="project" value="FlyBase"/>
</dbReference>
<dbReference type="GO" id="GO:0008293">
    <property type="term" value="P:torso signaling pathway"/>
    <property type="evidence" value="ECO:0000316"/>
    <property type="project" value="FlyBase"/>
</dbReference>
<dbReference type="GO" id="GO:0035202">
    <property type="term" value="P:tracheal pit formation in open tracheal system"/>
    <property type="evidence" value="ECO:0000270"/>
    <property type="project" value="FlyBase"/>
</dbReference>
<dbReference type="GO" id="GO:0048010">
    <property type="term" value="P:vascular endothelial growth factor receptor signaling pathway"/>
    <property type="evidence" value="ECO:0000314"/>
    <property type="project" value="FlyBase"/>
</dbReference>
<dbReference type="CDD" id="cd07849">
    <property type="entry name" value="STKc_ERK1_2_like"/>
    <property type="match status" value="1"/>
</dbReference>
<dbReference type="FunFam" id="1.10.510.10:FF:000624">
    <property type="entry name" value="Mitogen-activated protein kinase"/>
    <property type="match status" value="1"/>
</dbReference>
<dbReference type="FunFam" id="3.30.200.20:FF:000181">
    <property type="entry name" value="Mitogen-activated protein kinase"/>
    <property type="match status" value="1"/>
</dbReference>
<dbReference type="Gene3D" id="3.30.200.20">
    <property type="entry name" value="Phosphorylase Kinase, domain 1"/>
    <property type="match status" value="1"/>
</dbReference>
<dbReference type="Gene3D" id="1.10.510.10">
    <property type="entry name" value="Transferase(Phosphotransferase) domain 1"/>
    <property type="match status" value="1"/>
</dbReference>
<dbReference type="InterPro" id="IPR011009">
    <property type="entry name" value="Kinase-like_dom_sf"/>
</dbReference>
<dbReference type="InterPro" id="IPR050117">
    <property type="entry name" value="MAP_kinase"/>
</dbReference>
<dbReference type="InterPro" id="IPR003527">
    <property type="entry name" value="MAP_kinase_CS"/>
</dbReference>
<dbReference type="InterPro" id="IPR008349">
    <property type="entry name" value="MAPK_ERK1/2"/>
</dbReference>
<dbReference type="InterPro" id="IPR000719">
    <property type="entry name" value="Prot_kinase_dom"/>
</dbReference>
<dbReference type="InterPro" id="IPR017441">
    <property type="entry name" value="Protein_kinase_ATP_BS"/>
</dbReference>
<dbReference type="InterPro" id="IPR008271">
    <property type="entry name" value="Ser/Thr_kinase_AS"/>
</dbReference>
<dbReference type="PANTHER" id="PTHR24055">
    <property type="entry name" value="MITOGEN-ACTIVATED PROTEIN KINASE"/>
    <property type="match status" value="1"/>
</dbReference>
<dbReference type="Pfam" id="PF00069">
    <property type="entry name" value="Pkinase"/>
    <property type="match status" value="1"/>
</dbReference>
<dbReference type="PRINTS" id="PR01770">
    <property type="entry name" value="ERK1ERK2MAPK"/>
</dbReference>
<dbReference type="SMART" id="SM00220">
    <property type="entry name" value="S_TKc"/>
    <property type="match status" value="1"/>
</dbReference>
<dbReference type="SUPFAM" id="SSF56112">
    <property type="entry name" value="Protein kinase-like (PK-like)"/>
    <property type="match status" value="1"/>
</dbReference>
<dbReference type="PROSITE" id="PS01351">
    <property type="entry name" value="MAPK"/>
    <property type="match status" value="1"/>
</dbReference>
<dbReference type="PROSITE" id="PS00107">
    <property type="entry name" value="PROTEIN_KINASE_ATP"/>
    <property type="match status" value="1"/>
</dbReference>
<dbReference type="PROSITE" id="PS50011">
    <property type="entry name" value="PROTEIN_KINASE_DOM"/>
    <property type="match status" value="1"/>
</dbReference>
<dbReference type="PROSITE" id="PS00108">
    <property type="entry name" value="PROTEIN_KINASE_ST"/>
    <property type="match status" value="1"/>
</dbReference>
<evidence type="ECO:0000250" key="1"/>
<evidence type="ECO:0000255" key="2">
    <source>
        <dbReference type="PROSITE-ProRule" id="PRU00159"/>
    </source>
</evidence>
<evidence type="ECO:0000255" key="3">
    <source>
        <dbReference type="PROSITE-ProRule" id="PRU10027"/>
    </source>
</evidence>
<evidence type="ECO:0000269" key="4">
    <source>
    </source>
</evidence>
<evidence type="ECO:0000269" key="5">
    <source>
    </source>
</evidence>
<evidence type="ECO:0000269" key="6">
    <source>
    </source>
</evidence>
<evidence type="ECO:0000269" key="7">
    <source>
    </source>
</evidence>
<evidence type="ECO:0000269" key="8">
    <source>
    </source>
</evidence>
<evidence type="ECO:0000269" key="9">
    <source>
    </source>
</evidence>
<evidence type="ECO:0000303" key="10">
    <source>
    </source>
</evidence>
<evidence type="ECO:0000303" key="11">
    <source>
    </source>
</evidence>
<evidence type="ECO:0000303" key="12">
    <source>
    </source>
</evidence>
<evidence type="ECO:0000305" key="13"/>
<evidence type="ECO:0000312" key="14">
    <source>
        <dbReference type="FlyBase" id="FBgn0003256"/>
    </source>
</evidence>
<name>ERKA_DROME</name>
<proteinExistence type="evidence at protein level"/>
<gene>
    <name evidence="12 14" type="primary">rl</name>
    <name evidence="10" type="synonym">ERKa</name>
    <name evidence="11" type="synonym">MAPK</name>
    <name evidence="14" type="ORF">CG12559</name>
</gene>
<reference key="1">
    <citation type="journal article" date="1992" name="Proc. Natl. Acad. Sci. U.S.A.">
        <title>Primary structure, expression, and signal-dependent tyrosine phosphorylation of a Drosophila homolog of extracellular signal-regulated kinase.</title>
        <authorList>
            <person name="Biggs W.H. III"/>
            <person name="Zipursky S.L."/>
        </authorList>
    </citation>
    <scope>NUCLEOTIDE SEQUENCE [MRNA] (ISOFORM C)</scope>
    <scope>SUBCELLULAR LOCATION</scope>
    <scope>TISSUE SPECIFICITY</scope>
    <scope>DEVELOPMENTAL STAGE</scope>
    <scope>PHOSPHORYLATION</scope>
    <source>
        <strain>Oregon-R</strain>
        <tissue>Embryo</tissue>
        <tissue>Imaginal disk</tissue>
    </source>
</reference>
<reference key="2">
    <citation type="journal article" date="1993" name="Proc. Natl. Acad. Sci. U.S.A.">
        <authorList>
            <person name="Biggs W.H. III"/>
            <person name="Zipursky S.L."/>
        </authorList>
    </citation>
    <scope>ERRATUM OF PUBMED:1378625</scope>
</reference>
<reference key="3">
    <citation type="journal article" date="2000" name="Science">
        <title>The genome sequence of Drosophila melanogaster.</title>
        <authorList>
            <person name="Adams M.D."/>
            <person name="Celniker S.E."/>
            <person name="Holt R.A."/>
            <person name="Evans C.A."/>
            <person name="Gocayne J.D."/>
            <person name="Amanatides P.G."/>
            <person name="Scherer S.E."/>
            <person name="Li P.W."/>
            <person name="Hoskins R.A."/>
            <person name="Galle R.F."/>
            <person name="George R.A."/>
            <person name="Lewis S.E."/>
            <person name="Richards S."/>
            <person name="Ashburner M."/>
            <person name="Henderson S.N."/>
            <person name="Sutton G.G."/>
            <person name="Wortman J.R."/>
            <person name="Yandell M.D."/>
            <person name="Zhang Q."/>
            <person name="Chen L.X."/>
            <person name="Brandon R.C."/>
            <person name="Rogers Y.-H.C."/>
            <person name="Blazej R.G."/>
            <person name="Champe M."/>
            <person name="Pfeiffer B.D."/>
            <person name="Wan K.H."/>
            <person name="Doyle C."/>
            <person name="Baxter E.G."/>
            <person name="Helt G."/>
            <person name="Nelson C.R."/>
            <person name="Miklos G.L.G."/>
            <person name="Abril J.F."/>
            <person name="Agbayani A."/>
            <person name="An H.-J."/>
            <person name="Andrews-Pfannkoch C."/>
            <person name="Baldwin D."/>
            <person name="Ballew R.M."/>
            <person name="Basu A."/>
            <person name="Baxendale J."/>
            <person name="Bayraktaroglu L."/>
            <person name="Beasley E.M."/>
            <person name="Beeson K.Y."/>
            <person name="Benos P.V."/>
            <person name="Berman B.P."/>
            <person name="Bhandari D."/>
            <person name="Bolshakov S."/>
            <person name="Borkova D."/>
            <person name="Botchan M.R."/>
            <person name="Bouck J."/>
            <person name="Brokstein P."/>
            <person name="Brottier P."/>
            <person name="Burtis K.C."/>
            <person name="Busam D.A."/>
            <person name="Butler H."/>
            <person name="Cadieu E."/>
            <person name="Center A."/>
            <person name="Chandra I."/>
            <person name="Cherry J.M."/>
            <person name="Cawley S."/>
            <person name="Dahlke C."/>
            <person name="Davenport L.B."/>
            <person name="Davies P."/>
            <person name="de Pablos B."/>
            <person name="Delcher A."/>
            <person name="Deng Z."/>
            <person name="Mays A.D."/>
            <person name="Dew I."/>
            <person name="Dietz S.M."/>
            <person name="Dodson K."/>
            <person name="Doup L.E."/>
            <person name="Downes M."/>
            <person name="Dugan-Rocha S."/>
            <person name="Dunkov B.C."/>
            <person name="Dunn P."/>
            <person name="Durbin K.J."/>
            <person name="Evangelista C.C."/>
            <person name="Ferraz C."/>
            <person name="Ferriera S."/>
            <person name="Fleischmann W."/>
            <person name="Fosler C."/>
            <person name="Gabrielian A.E."/>
            <person name="Garg N.S."/>
            <person name="Gelbart W.M."/>
            <person name="Glasser K."/>
            <person name="Glodek A."/>
            <person name="Gong F."/>
            <person name="Gorrell J.H."/>
            <person name="Gu Z."/>
            <person name="Guan P."/>
            <person name="Harris M."/>
            <person name="Harris N.L."/>
            <person name="Harvey D.A."/>
            <person name="Heiman T.J."/>
            <person name="Hernandez J.R."/>
            <person name="Houck J."/>
            <person name="Hostin D."/>
            <person name="Houston K.A."/>
            <person name="Howland T.J."/>
            <person name="Wei M.-H."/>
            <person name="Ibegwam C."/>
            <person name="Jalali M."/>
            <person name="Kalush F."/>
            <person name="Karpen G.H."/>
            <person name="Ke Z."/>
            <person name="Kennison J.A."/>
            <person name="Ketchum K.A."/>
            <person name="Kimmel B.E."/>
            <person name="Kodira C.D."/>
            <person name="Kraft C.L."/>
            <person name="Kravitz S."/>
            <person name="Kulp D."/>
            <person name="Lai Z."/>
            <person name="Lasko P."/>
            <person name="Lei Y."/>
            <person name="Levitsky A.A."/>
            <person name="Li J.H."/>
            <person name="Li Z."/>
            <person name="Liang Y."/>
            <person name="Lin X."/>
            <person name="Liu X."/>
            <person name="Mattei B."/>
            <person name="McIntosh T.C."/>
            <person name="McLeod M.P."/>
            <person name="McPherson D."/>
            <person name="Merkulov G."/>
            <person name="Milshina N.V."/>
            <person name="Mobarry C."/>
            <person name="Morris J."/>
            <person name="Moshrefi A."/>
            <person name="Mount S.M."/>
            <person name="Moy M."/>
            <person name="Murphy B."/>
            <person name="Murphy L."/>
            <person name="Muzny D.M."/>
            <person name="Nelson D.L."/>
            <person name="Nelson D.R."/>
            <person name="Nelson K.A."/>
            <person name="Nixon K."/>
            <person name="Nusskern D.R."/>
            <person name="Pacleb J.M."/>
            <person name="Palazzolo M."/>
            <person name="Pittman G.S."/>
            <person name="Pan S."/>
            <person name="Pollard J."/>
            <person name="Puri V."/>
            <person name="Reese M.G."/>
            <person name="Reinert K."/>
            <person name="Remington K."/>
            <person name="Saunders R.D.C."/>
            <person name="Scheeler F."/>
            <person name="Shen H."/>
            <person name="Shue B.C."/>
            <person name="Siden-Kiamos I."/>
            <person name="Simpson M."/>
            <person name="Skupski M.P."/>
            <person name="Smith T.J."/>
            <person name="Spier E."/>
            <person name="Spradling A.C."/>
            <person name="Stapleton M."/>
            <person name="Strong R."/>
            <person name="Sun E."/>
            <person name="Svirskas R."/>
            <person name="Tector C."/>
            <person name="Turner R."/>
            <person name="Venter E."/>
            <person name="Wang A.H."/>
            <person name="Wang X."/>
            <person name="Wang Z.-Y."/>
            <person name="Wassarman D.A."/>
            <person name="Weinstock G.M."/>
            <person name="Weissenbach J."/>
            <person name="Williams S.M."/>
            <person name="Woodage T."/>
            <person name="Worley K.C."/>
            <person name="Wu D."/>
            <person name="Yang S."/>
            <person name="Yao Q.A."/>
            <person name="Ye J."/>
            <person name="Yeh R.-F."/>
            <person name="Zaveri J.S."/>
            <person name="Zhan M."/>
            <person name="Zhang G."/>
            <person name="Zhao Q."/>
            <person name="Zheng L."/>
            <person name="Zheng X.H."/>
            <person name="Zhong F.N."/>
            <person name="Zhong W."/>
            <person name="Zhou X."/>
            <person name="Zhu S.C."/>
            <person name="Zhu X."/>
            <person name="Smith H.O."/>
            <person name="Gibbs R.A."/>
            <person name="Myers E.W."/>
            <person name="Rubin G.M."/>
            <person name="Venter J.C."/>
        </authorList>
    </citation>
    <scope>NUCLEOTIDE SEQUENCE [LARGE SCALE GENOMIC DNA]</scope>
    <source>
        <strain>Berkeley</strain>
    </source>
</reference>
<reference key="4">
    <citation type="journal article" date="2002" name="Genome Biol.">
        <title>Annotation of the Drosophila melanogaster euchromatic genome: a systematic review.</title>
        <authorList>
            <person name="Misra S."/>
            <person name="Crosby M.A."/>
            <person name="Mungall C.J."/>
            <person name="Matthews B.B."/>
            <person name="Campbell K.S."/>
            <person name="Hradecky P."/>
            <person name="Huang Y."/>
            <person name="Kaminker J.S."/>
            <person name="Millburn G.H."/>
            <person name="Prochnik S.E."/>
            <person name="Smith C.D."/>
            <person name="Tupy J.L."/>
            <person name="Whitfield E.J."/>
            <person name="Bayraktaroglu L."/>
            <person name="Berman B.P."/>
            <person name="Bettencourt B.R."/>
            <person name="Celniker S.E."/>
            <person name="de Grey A.D.N.J."/>
            <person name="Drysdale R.A."/>
            <person name="Harris N.L."/>
            <person name="Richter J."/>
            <person name="Russo S."/>
            <person name="Schroeder A.J."/>
            <person name="Shu S.Q."/>
            <person name="Stapleton M."/>
            <person name="Yamada C."/>
            <person name="Ashburner M."/>
            <person name="Gelbart W.M."/>
            <person name="Rubin G.M."/>
            <person name="Lewis S.E."/>
        </authorList>
    </citation>
    <scope>GENOME REANNOTATION</scope>
    <source>
        <strain>Berkeley</strain>
    </source>
</reference>
<reference key="5">
    <citation type="journal article" date="2002" name="Genome Biol.">
        <title>A Drosophila full-length cDNA resource.</title>
        <authorList>
            <person name="Stapleton M."/>
            <person name="Carlson J.W."/>
            <person name="Brokstein P."/>
            <person name="Yu C."/>
            <person name="Champe M."/>
            <person name="George R.A."/>
            <person name="Guarin H."/>
            <person name="Kronmiller B."/>
            <person name="Pacleb J.M."/>
            <person name="Park S."/>
            <person name="Wan K.H."/>
            <person name="Rubin G.M."/>
            <person name="Celniker S.E."/>
        </authorList>
    </citation>
    <scope>NUCLEOTIDE SEQUENCE [LARGE SCALE MRNA] (ISOFORM C)</scope>
    <source>
        <strain>Berkeley</strain>
        <tissue>Embryo</tissue>
    </source>
</reference>
<reference key="6">
    <citation type="journal article" date="1994" name="EMBO J.">
        <title>The Drosophila rolled locus encodes a MAP kinase required in the sevenless signal transduction pathway.</title>
        <authorList>
            <person name="Biggs W.H. III"/>
            <person name="Zavitz K.H."/>
            <person name="Dickson B."/>
            <person name="van der Straten A."/>
            <person name="Brunner D."/>
            <person name="Hafen E."/>
            <person name="Zipursky S.L."/>
        </authorList>
    </citation>
    <scope>FUNCTION</scope>
    <source>
        <strain>Oregon-R</strain>
    </source>
</reference>
<reference key="7">
    <citation type="journal article" date="2008" name="J. Proteome Res.">
        <title>Phosphoproteome analysis of Drosophila melanogaster embryos.</title>
        <authorList>
            <person name="Zhai B."/>
            <person name="Villen J."/>
            <person name="Beausoleil S.A."/>
            <person name="Mintseris J."/>
            <person name="Gygi S.P."/>
        </authorList>
    </citation>
    <scope>PHOSPHORYLATION [LARGE SCALE ANALYSIS] AT THR-198 AND TYR-200</scope>
    <scope>IDENTIFICATION BY MASS SPECTROMETRY</scope>
    <source>
        <tissue>Embryo</tissue>
    </source>
</reference>
<reference key="8">
    <citation type="journal article" date="2009" name="Science">
        <title>The insect neuropeptide PTTH activates receptor tyrosine kinase torso to initiate metamorphosis.</title>
        <authorList>
            <person name="Rewitz K.F."/>
            <person name="Yamanaka N."/>
            <person name="Gilbert L.I."/>
            <person name="O'Connor M.B."/>
        </authorList>
    </citation>
    <scope>FUNCTION</scope>
    <scope>DISRUPTION PHENOTYPE</scope>
</reference>
<reference key="9">
    <citation type="journal article" date="2011" name="PLoS ONE">
        <title>Hole-in-one mutant phenotypes link EGFR/ERK signaling to epithelial tissue repair in Drosophila.</title>
        <authorList>
            <person name="Geiger J.A."/>
            <person name="Carvalho L."/>
            <person name="Campos I."/>
            <person name="Santos A.C."/>
            <person name="Jacinto A."/>
        </authorList>
    </citation>
    <scope>FUNCTION</scope>
    <scope>DISRUPTION PHENOTYPE</scope>
</reference>
<reference key="10">
    <citation type="journal article" date="2016" name="PLoS Biol.">
        <title>The Deubiquitinase USP47 Stabilizes MAPK by Counteracting the Function of the N-end Rule ligase POE/UBR4 in Drosophila.</title>
        <authorList>
            <person name="Ashton-Beaucage D."/>
            <person name="Lemieux C."/>
            <person name="Udell C.M."/>
            <person name="Sahmi M."/>
            <person name="Rochette S."/>
            <person name="Therrien M."/>
        </authorList>
    </citation>
    <scope>FUNCTION</scope>
</reference>
<keyword id="KW-0025">Alternative splicing</keyword>
<keyword id="KW-0067">ATP-binding</keyword>
<keyword id="KW-0131">Cell cycle</keyword>
<keyword id="KW-0963">Cytoplasm</keyword>
<keyword id="KW-0418">Kinase</keyword>
<keyword id="KW-0547">Nucleotide-binding</keyword>
<keyword id="KW-0539">Nucleus</keyword>
<keyword id="KW-0597">Phosphoprotein</keyword>
<keyword id="KW-1185">Reference proteome</keyword>
<keyword id="KW-0723">Serine/threonine-protein kinase</keyword>
<keyword id="KW-0808">Transferase</keyword>
<feature type="chain" id="PRO_0000186309" description="Mitogen-activated protein kinase ERK-A">
    <location>
        <begin position="1"/>
        <end position="376"/>
    </location>
</feature>
<feature type="domain" description="Protein kinase" evidence="2">
    <location>
        <begin position="38"/>
        <end position="326"/>
    </location>
</feature>
<feature type="short sequence motif" description="TXY">
    <location>
        <begin position="198"/>
        <end position="200"/>
    </location>
</feature>
<feature type="active site" description="Proton acceptor" evidence="2 3">
    <location>
        <position position="162"/>
    </location>
</feature>
<feature type="binding site" evidence="2">
    <location>
        <begin position="44"/>
        <end position="52"/>
    </location>
    <ligand>
        <name>ATP</name>
        <dbReference type="ChEBI" id="CHEBI:30616"/>
    </ligand>
</feature>
<feature type="binding site" evidence="2">
    <location>
        <position position="67"/>
    </location>
    <ligand>
        <name>ATP</name>
        <dbReference type="ChEBI" id="CHEBI:30616"/>
    </ligand>
</feature>
<feature type="modified residue" description="Phosphothreonine" evidence="5">
    <location>
        <position position="198"/>
    </location>
</feature>
<feature type="modified residue" description="Phosphotyrosine" evidence="5">
    <location>
        <position position="200"/>
    </location>
</feature>
<feature type="splice variant" id="VSP_047792" description="In isoform H." evidence="13">
    <location>
        <begin position="1"/>
        <end position="110"/>
    </location>
</feature>
<feature type="splice variant" id="VSP_047793" description="In isoform G." evidence="13">
    <location>
        <begin position="1"/>
        <end position="45"/>
    </location>
</feature>
<feature type="splice variant" id="VSP_047794" description="In isoform G." evidence="13">
    <original>EGAYGMVV</original>
    <variation>MESALVIR</variation>
    <location>
        <begin position="46"/>
        <end position="53"/>
    </location>
</feature>
<accession>P40417</accession>
<accession>A0A021WW06</accession>
<accession>A8Y4W1</accession>
<accession>A8Y4W2</accession>
<accession>Q7PL59</accession>
<accession>Q9W5M2</accession>
<accession>Q9W5M3</accession>
<protein>
    <recommendedName>
        <fullName>Mitogen-activated protein kinase ERK-A</fullName>
        <ecNumber>2.7.11.24</ecNumber>
    </recommendedName>
    <alternativeName>
        <fullName>Extracellular-regulated kinase A</fullName>
    </alternativeName>
    <alternativeName>
        <fullName>Protein rolled</fullName>
    </alternativeName>
</protein>
<sequence length="376" mass="43151">MEEFNSSGSVVNGTGSTEVPQSNAEVIRGQIFEVGPRYIKLAYIGEGAYGMVVSADDTLTNQRVAIKKISPFEHQTYCQRTLREITILTRFKHENIIDIRDILRVDSIDQMRDVYIVQCLMETDLYKLLKTQRLSNDHICYFLYQILRGLKYIHSANVLHRDLKPSNLLLNKTCDLKICDFGLARIADPEHDHTGFLTEYVATRWYRAPEIMLNSKGYTKSIDIWSVGCILAEMLSNRPIFPGKHYLDQLNHILGVLGSPSRDDLECIINEKARNYLESLPFKPNVPWAKLFPNADALALDLLGKMLTFNPHKRIPVEEALAHPYLEQYYDPGDEPVAEVPFRINMENDDISRDALKSLIFEETLKFKERQPDNAP</sequence>
<comment type="function">
    <text evidence="6 7 8 9">Serine/threonine kinase which acts as an essential component of the MAP kinase signal transduction pathway to regulate proliferation, differentiation and effect cell fate decisions in various tissues (PubMed:19965758, PubMed:22140578, PubMed:27552662, PubMed:8157002). Required downstream of phl/Raf in the sev/sevenless, tor/torso, and EGF receptor homolog Egfr signal transduction pathways (PubMed:8157002). Required for embryonic epithelial tissue repair (PubMed:22140578). During larval development, mediates Ptth/tor signaling leading to the production of ecdysone, a hormone required for the initiation of metamorphosis (PubMed:19965758).</text>
</comment>
<comment type="catalytic activity">
    <reaction>
        <text>L-seryl-[protein] + ATP = O-phospho-L-seryl-[protein] + ADP + H(+)</text>
        <dbReference type="Rhea" id="RHEA:17989"/>
        <dbReference type="Rhea" id="RHEA-COMP:9863"/>
        <dbReference type="Rhea" id="RHEA-COMP:11604"/>
        <dbReference type="ChEBI" id="CHEBI:15378"/>
        <dbReference type="ChEBI" id="CHEBI:29999"/>
        <dbReference type="ChEBI" id="CHEBI:30616"/>
        <dbReference type="ChEBI" id="CHEBI:83421"/>
        <dbReference type="ChEBI" id="CHEBI:456216"/>
        <dbReference type="EC" id="2.7.11.24"/>
    </reaction>
</comment>
<comment type="catalytic activity">
    <reaction>
        <text>L-threonyl-[protein] + ATP = O-phospho-L-threonyl-[protein] + ADP + H(+)</text>
        <dbReference type="Rhea" id="RHEA:46608"/>
        <dbReference type="Rhea" id="RHEA-COMP:11060"/>
        <dbReference type="Rhea" id="RHEA-COMP:11605"/>
        <dbReference type="ChEBI" id="CHEBI:15378"/>
        <dbReference type="ChEBI" id="CHEBI:30013"/>
        <dbReference type="ChEBI" id="CHEBI:30616"/>
        <dbReference type="ChEBI" id="CHEBI:61977"/>
        <dbReference type="ChEBI" id="CHEBI:456216"/>
        <dbReference type="EC" id="2.7.11.24"/>
    </reaction>
</comment>
<comment type="cofactor">
    <cofactor evidence="1">
        <name>Mg(2+)</name>
        <dbReference type="ChEBI" id="CHEBI:18420"/>
    </cofactor>
</comment>
<comment type="activity regulation">
    <text evidence="1">Activated by tyrosine and threonine phosphorylation.</text>
</comment>
<comment type="interaction">
    <interactant intactId="EBI-867790">
        <id>P40417</id>
    </interactant>
    <interactant intactId="EBI-98330">
        <id>Q9U1H0</id>
        <label>cic</label>
    </interactant>
    <organismsDiffer>false</organismsDiffer>
    <experiments>3</experiments>
</comment>
<comment type="interaction">
    <interactant intactId="EBI-867790">
        <id>P40417</id>
    </interactant>
    <interactant intactId="EBI-100228">
        <id>Q9V393</id>
        <label>krz</label>
    </interactant>
    <organismsDiffer>false</organismsDiffer>
    <experiments>12</experiments>
</comment>
<comment type="interaction">
    <interactant intactId="EBI-867790">
        <id>P40417</id>
    </interactant>
    <interactant intactId="EBI-870498">
        <id>Q24496</id>
        <label>S6kII</label>
    </interactant>
    <organismsDiffer>false</organismsDiffer>
    <experiments>2</experiments>
</comment>
<comment type="interaction">
    <interactant intactId="EBI-867790">
        <id>P40417</id>
    </interactant>
    <interactant intactId="EBI-714559">
        <id>P32121</id>
        <label>ARRB2</label>
    </interactant>
    <organismsDiffer>true</organismsDiffer>
    <experiments>4</experiments>
</comment>
<comment type="subcellular location">
    <subcellularLocation>
        <location evidence="4">Cytoplasm</location>
    </subcellularLocation>
    <subcellularLocation>
        <location evidence="4">Nucleus</location>
    </subcellularLocation>
</comment>
<comment type="alternative products">
    <event type="alternative splicing"/>
    <isoform>
        <id>P40417-3</id>
        <name>C</name>
        <name>D</name>
        <name>E</name>
        <sequence type="displayed"/>
    </isoform>
    <isoform>
        <id>P40417-1</id>
        <name>H</name>
        <name>F</name>
        <sequence type="described" ref="VSP_047792"/>
    </isoform>
    <isoform>
        <id>P40417-2</id>
        <name>G</name>
        <name>B</name>
        <sequence type="described" ref="VSP_047793 VSP_047794"/>
    </isoform>
</comment>
<comment type="tissue specificity">
    <text evidence="4">In third instar larvae, expressed in eye imaginal disks. In adults, expressed in head and body.</text>
</comment>
<comment type="developmental stage">
    <text evidence="4">Embryos, larvae and adults.</text>
</comment>
<comment type="domain">
    <text>The TXY motif contains the threonine and tyrosine residues whose phosphorylation activates the MAP kinases.</text>
</comment>
<comment type="PTM">
    <text evidence="1 4 5">Dually phosphorylated on Thr-198 and Tyr-200, which activates the enzyme (By similarity). Phosphorylated on tyrosine residue(s) in response to insulin.</text>
</comment>
<comment type="disruption phenotype">
    <text evidence="6 7">Embryonic wound healing defects (PubMed:22140578). RNAi-mediated knockdown in the prothoracic gland (PG) delays the onset of pupariation by prolonging the L3 larval stage and increases adult weight (PubMed:19965758).</text>
</comment>
<comment type="similarity">
    <text evidence="13">Belongs to the protein kinase superfamily. CMGC Ser/Thr protein kinase family. MAP kinase subfamily.</text>
</comment>